<feature type="chain" id="PRO_0000240372" description="ADIPOR-like receptor IZH1">
    <location>
        <begin position="1"/>
        <end position="317"/>
    </location>
</feature>
<feature type="topological domain" description="Lumenal" evidence="1">
    <location>
        <begin position="1"/>
        <end position="80"/>
    </location>
</feature>
<feature type="transmembrane region" description="Helical" evidence="2">
    <location>
        <begin position="81"/>
        <end position="101"/>
    </location>
</feature>
<feature type="topological domain" description="Cytoplasmic" evidence="1">
    <location>
        <begin position="102"/>
        <end position="113"/>
    </location>
</feature>
<feature type="transmembrane region" description="Helical" evidence="2">
    <location>
        <begin position="114"/>
        <end position="136"/>
    </location>
</feature>
<feature type="topological domain" description="Lumenal" evidence="1">
    <location>
        <begin position="137"/>
        <end position="148"/>
    </location>
</feature>
<feature type="transmembrane region" description="Helical" evidence="2">
    <location>
        <begin position="149"/>
        <end position="169"/>
    </location>
</feature>
<feature type="topological domain" description="Cytoplasmic" evidence="1">
    <location>
        <begin position="170"/>
        <end position="175"/>
    </location>
</feature>
<feature type="transmembrane region" description="Helical" evidence="2">
    <location>
        <begin position="176"/>
        <end position="196"/>
    </location>
</feature>
<feature type="topological domain" description="Lumenal" evidence="1">
    <location>
        <begin position="197"/>
        <end position="210"/>
    </location>
</feature>
<feature type="transmembrane region" description="Helical" evidence="2">
    <location>
        <begin position="211"/>
        <end position="231"/>
    </location>
</feature>
<feature type="topological domain" description="Cytoplasmic" evidence="1">
    <location>
        <begin position="232"/>
        <end position="243"/>
    </location>
</feature>
<feature type="transmembrane region" description="Helical" evidence="2">
    <location>
        <begin position="244"/>
        <end position="264"/>
    </location>
</feature>
<feature type="topological domain" description="Lumenal" evidence="1">
    <location>
        <begin position="265"/>
        <end position="283"/>
    </location>
</feature>
<feature type="transmembrane region" description="Helical" evidence="2">
    <location>
        <begin position="284"/>
        <end position="304"/>
    </location>
</feature>
<feature type="topological domain" description="Cytoplasmic" evidence="1">
    <location>
        <begin position="305"/>
        <end position="317"/>
    </location>
</feature>
<feature type="glycosylation site" description="N-linked (GlcNAc...) asparagine" evidence="2">
    <location>
        <position position="73"/>
    </location>
</feature>
<feature type="glycosylation site" description="N-linked (GlcNAc...) asparagine" evidence="2">
    <location>
        <position position="197"/>
    </location>
</feature>
<reference key="1">
    <citation type="journal article" date="2004" name="Science">
        <title>The Ashbya gossypii genome as a tool for mapping the ancient Saccharomyces cerevisiae genome.</title>
        <authorList>
            <person name="Dietrich F.S."/>
            <person name="Voegeli S."/>
            <person name="Brachat S."/>
            <person name="Lerch A."/>
            <person name="Gates K."/>
            <person name="Steiner S."/>
            <person name="Mohr C."/>
            <person name="Poehlmann R."/>
            <person name="Luedi P."/>
            <person name="Choi S."/>
            <person name="Wing R.A."/>
            <person name="Flavier A."/>
            <person name="Gaffney T.D."/>
            <person name="Philippsen P."/>
        </authorList>
    </citation>
    <scope>NUCLEOTIDE SEQUENCE [LARGE SCALE GENOMIC DNA]</scope>
    <source>
        <strain>ATCC 10895 / CBS 109.51 / FGSC 9923 / NRRL Y-1056</strain>
    </source>
</reference>
<reference key="2">
    <citation type="journal article" date="2013" name="G3 (Bethesda)">
        <title>Genomes of Ashbya fungi isolated from insects reveal four mating-type loci, numerous translocations, lack of transposons, and distinct gene duplications.</title>
        <authorList>
            <person name="Dietrich F.S."/>
            <person name="Voegeli S."/>
            <person name="Kuo S."/>
            <person name="Philippsen P."/>
        </authorList>
    </citation>
    <scope>GENOME REANNOTATION</scope>
    <source>
        <strain>ATCC 10895 / CBS 109.51 / FGSC 9923 / NRRL Y-1056</strain>
    </source>
</reference>
<dbReference type="EMBL" id="AE016819">
    <property type="protein sequence ID" value="AAS53708.1"/>
    <property type="molecule type" value="Genomic_DNA"/>
</dbReference>
<dbReference type="RefSeq" id="NP_985884.1">
    <property type="nucleotide sequence ID" value="NM_211239.1"/>
</dbReference>
<dbReference type="SMR" id="Q753H5"/>
<dbReference type="FunCoup" id="Q753H5">
    <property type="interactions" value="273"/>
</dbReference>
<dbReference type="STRING" id="284811.Q753H5"/>
<dbReference type="GlyCosmos" id="Q753H5">
    <property type="glycosylation" value="2 sites, No reported glycans"/>
</dbReference>
<dbReference type="EnsemblFungi" id="AAS53708">
    <property type="protein sequence ID" value="AAS53708"/>
    <property type="gene ID" value="AGOS_AFR337W"/>
</dbReference>
<dbReference type="GeneID" id="4622151"/>
<dbReference type="KEGG" id="ago:AGOS_AFR337W"/>
<dbReference type="eggNOG" id="KOG0748">
    <property type="taxonomic scope" value="Eukaryota"/>
</dbReference>
<dbReference type="HOGENOM" id="CLU_023075_2_0_1"/>
<dbReference type="InParanoid" id="Q753H5"/>
<dbReference type="OMA" id="WGHPAIF"/>
<dbReference type="OrthoDB" id="529367at2759"/>
<dbReference type="Proteomes" id="UP000000591">
    <property type="component" value="Chromosome VI"/>
</dbReference>
<dbReference type="GO" id="GO:0005789">
    <property type="term" value="C:endoplasmic reticulum membrane"/>
    <property type="evidence" value="ECO:0007669"/>
    <property type="project" value="UniProtKB-SubCell"/>
</dbReference>
<dbReference type="GO" id="GO:0038023">
    <property type="term" value="F:signaling receptor activity"/>
    <property type="evidence" value="ECO:0000318"/>
    <property type="project" value="GO_Central"/>
</dbReference>
<dbReference type="GO" id="GO:0006882">
    <property type="term" value="P:intracellular zinc ion homeostasis"/>
    <property type="evidence" value="ECO:0000318"/>
    <property type="project" value="GO_Central"/>
</dbReference>
<dbReference type="InterPro" id="IPR004254">
    <property type="entry name" value="AdipoR/HlyIII-related"/>
</dbReference>
<dbReference type="PANTHER" id="PTHR20855:SF95">
    <property type="entry name" value="ADIPOR-LIKE RECEPTOR IZH1"/>
    <property type="match status" value="1"/>
</dbReference>
<dbReference type="PANTHER" id="PTHR20855">
    <property type="entry name" value="ADIPOR/PROGESTIN RECEPTOR-RELATED"/>
    <property type="match status" value="1"/>
</dbReference>
<dbReference type="Pfam" id="PF03006">
    <property type="entry name" value="HlyIII"/>
    <property type="match status" value="1"/>
</dbReference>
<accession>Q753H5</accession>
<sequence length="317" mass="35981">MSEERGMKEQTISEMAQEMAHTTSEGLKKRIRKLYTFDELPAWQKDNELILSGYVRETNSVKECLRAMTYFNNESINIYTHLIPGVAYLVLFLIFADLVLAQLLPGLDAGEHRMLRFYLLGAFTCLACSSCFHCLKQHSEPHSRLWSKVDYLGILAQITCSTISLLYYGYHSYPSHFVFFSTLTVALCSACAVLVLNDSFNTVAFRPLRAFLFMAFGLSGVIPVLAGSYQFGFAEWAARIQLKYVLYEAVFYITGALVYGFRIPERFAPGKFDMVGHSHQIFHLLVVLGTLCHFRAVTGSYIFICTGKHYSSLLMFI</sequence>
<keyword id="KW-0256">Endoplasmic reticulum</keyword>
<keyword id="KW-0325">Glycoprotein</keyword>
<keyword id="KW-0472">Membrane</keyword>
<keyword id="KW-1185">Reference proteome</keyword>
<keyword id="KW-0812">Transmembrane</keyword>
<keyword id="KW-1133">Transmembrane helix</keyword>
<name>IZH1_EREGS</name>
<protein>
    <recommendedName>
        <fullName>ADIPOR-like receptor IZH1</fullName>
    </recommendedName>
</protein>
<organism>
    <name type="scientific">Eremothecium gossypii (strain ATCC 10895 / CBS 109.51 / FGSC 9923 / NRRL Y-1056)</name>
    <name type="common">Yeast</name>
    <name type="synonym">Ashbya gossypii</name>
    <dbReference type="NCBI Taxonomy" id="284811"/>
    <lineage>
        <taxon>Eukaryota</taxon>
        <taxon>Fungi</taxon>
        <taxon>Dikarya</taxon>
        <taxon>Ascomycota</taxon>
        <taxon>Saccharomycotina</taxon>
        <taxon>Saccharomycetes</taxon>
        <taxon>Saccharomycetales</taxon>
        <taxon>Saccharomycetaceae</taxon>
        <taxon>Eremothecium</taxon>
    </lineage>
</organism>
<gene>
    <name type="primary">IZH1</name>
    <name type="ordered locus">AFR337W</name>
</gene>
<proteinExistence type="inferred from homology"/>
<comment type="function">
    <text evidence="1">ADIPOR-like receptor involved in zinc metabolism either by altering membrane sterol content or by directly altering cellular zinc levels.</text>
</comment>
<comment type="subcellular location">
    <subcellularLocation>
        <location evidence="1">Endoplasmic reticulum membrane</location>
        <topology evidence="1">Multi-pass membrane protein</topology>
    </subcellularLocation>
</comment>
<comment type="similarity">
    <text evidence="3">Belongs to the ADIPOR family.</text>
</comment>
<evidence type="ECO:0000250" key="1"/>
<evidence type="ECO:0000255" key="2"/>
<evidence type="ECO:0000305" key="3"/>